<comment type="subcellular location">
    <subcellularLocation>
        <location evidence="1">Plastid</location>
        <location evidence="1">Chloroplast</location>
    </subcellularLocation>
</comment>
<comment type="similarity">
    <text evidence="4">Belongs to the TRAFAC class myosin-kinesin ATPase superfamily. Kinesin family. KIN-7 subfamily.</text>
</comment>
<comment type="sequence caution" evidence="4">
    <conflict type="erroneous gene model prediction">
        <sequence resource="EMBL-CDS" id="BAS89294"/>
    </conflict>
</comment>
<comment type="sequence caution" evidence="4">
    <conflict type="erroneous gene model prediction">
        <sequence resource="EMBL-CDS" id="CAD41022"/>
    </conflict>
</comment>
<comment type="sequence caution" evidence="4">
    <conflict type="erroneous gene model prediction">
        <sequence resource="EMBL-CDS" id="CAE03214"/>
    </conflict>
</comment>
<comment type="sequence caution" evidence="4">
    <conflict type="erroneous gene model prediction">
        <sequence resource="EMBL-CDS" id="EEE61037"/>
    </conflict>
</comment>
<reference key="1">
    <citation type="journal article" date="2002" name="Nature">
        <title>Sequence and analysis of rice chromosome 4.</title>
        <authorList>
            <person name="Feng Q."/>
            <person name="Zhang Y."/>
            <person name="Hao P."/>
            <person name="Wang S."/>
            <person name="Fu G."/>
            <person name="Huang Y."/>
            <person name="Li Y."/>
            <person name="Zhu J."/>
            <person name="Liu Y."/>
            <person name="Hu X."/>
            <person name="Jia P."/>
            <person name="Zhang Y."/>
            <person name="Zhao Q."/>
            <person name="Ying K."/>
            <person name="Yu S."/>
            <person name="Tang Y."/>
            <person name="Weng Q."/>
            <person name="Zhang L."/>
            <person name="Lu Y."/>
            <person name="Mu J."/>
            <person name="Lu Y."/>
            <person name="Zhang L.S."/>
            <person name="Yu Z."/>
            <person name="Fan D."/>
            <person name="Liu X."/>
            <person name="Lu T."/>
            <person name="Li C."/>
            <person name="Wu Y."/>
            <person name="Sun T."/>
            <person name="Lei H."/>
            <person name="Li T."/>
            <person name="Hu H."/>
            <person name="Guan J."/>
            <person name="Wu M."/>
            <person name="Zhang R."/>
            <person name="Zhou B."/>
            <person name="Chen Z."/>
            <person name="Chen L."/>
            <person name="Jin Z."/>
            <person name="Wang R."/>
            <person name="Yin H."/>
            <person name="Cai Z."/>
            <person name="Ren S."/>
            <person name="Lv G."/>
            <person name="Gu W."/>
            <person name="Zhu G."/>
            <person name="Tu Y."/>
            <person name="Jia J."/>
            <person name="Zhang Y."/>
            <person name="Chen J."/>
            <person name="Kang H."/>
            <person name="Chen X."/>
            <person name="Shao C."/>
            <person name="Sun Y."/>
            <person name="Hu Q."/>
            <person name="Zhang X."/>
            <person name="Zhang W."/>
            <person name="Wang L."/>
            <person name="Ding C."/>
            <person name="Sheng H."/>
            <person name="Gu J."/>
            <person name="Chen S."/>
            <person name="Ni L."/>
            <person name="Zhu F."/>
            <person name="Chen W."/>
            <person name="Lan L."/>
            <person name="Lai Y."/>
            <person name="Cheng Z."/>
            <person name="Gu M."/>
            <person name="Jiang J."/>
            <person name="Li J."/>
            <person name="Hong G."/>
            <person name="Xue Y."/>
            <person name="Han B."/>
        </authorList>
    </citation>
    <scope>NUCLEOTIDE SEQUENCE [LARGE SCALE GENOMIC DNA]</scope>
    <source>
        <strain>cv. Nipponbare</strain>
    </source>
</reference>
<reference key="2">
    <citation type="journal article" date="2005" name="Nature">
        <title>The map-based sequence of the rice genome.</title>
        <authorList>
            <consortium name="International rice genome sequencing project (IRGSP)"/>
        </authorList>
    </citation>
    <scope>NUCLEOTIDE SEQUENCE [LARGE SCALE GENOMIC DNA]</scope>
    <source>
        <strain>cv. Nipponbare</strain>
    </source>
</reference>
<reference key="3">
    <citation type="journal article" date="2013" name="Rice">
        <title>Improvement of the Oryza sativa Nipponbare reference genome using next generation sequence and optical map data.</title>
        <authorList>
            <person name="Kawahara Y."/>
            <person name="de la Bastide M."/>
            <person name="Hamilton J.P."/>
            <person name="Kanamori H."/>
            <person name="McCombie W.R."/>
            <person name="Ouyang S."/>
            <person name="Schwartz D.C."/>
            <person name="Tanaka T."/>
            <person name="Wu J."/>
            <person name="Zhou S."/>
            <person name="Childs K.L."/>
            <person name="Davidson R.M."/>
            <person name="Lin H."/>
            <person name="Quesada-Ocampo L."/>
            <person name="Vaillancourt B."/>
            <person name="Sakai H."/>
            <person name="Lee S.S."/>
            <person name="Kim J."/>
            <person name="Numa H."/>
            <person name="Itoh T."/>
            <person name="Buell C.R."/>
            <person name="Matsumoto T."/>
        </authorList>
    </citation>
    <scope>GENOME REANNOTATION</scope>
    <source>
        <strain>cv. Nipponbare</strain>
    </source>
</reference>
<reference key="4">
    <citation type="journal article" date="2005" name="PLoS Biol.">
        <title>The genomes of Oryza sativa: a history of duplications.</title>
        <authorList>
            <person name="Yu J."/>
            <person name="Wang J."/>
            <person name="Lin W."/>
            <person name="Li S."/>
            <person name="Li H."/>
            <person name="Zhou J."/>
            <person name="Ni P."/>
            <person name="Dong W."/>
            <person name="Hu S."/>
            <person name="Zeng C."/>
            <person name="Zhang J."/>
            <person name="Zhang Y."/>
            <person name="Li R."/>
            <person name="Xu Z."/>
            <person name="Li S."/>
            <person name="Li X."/>
            <person name="Zheng H."/>
            <person name="Cong L."/>
            <person name="Lin L."/>
            <person name="Yin J."/>
            <person name="Geng J."/>
            <person name="Li G."/>
            <person name="Shi J."/>
            <person name="Liu J."/>
            <person name="Lv H."/>
            <person name="Li J."/>
            <person name="Wang J."/>
            <person name="Deng Y."/>
            <person name="Ran L."/>
            <person name="Shi X."/>
            <person name="Wang X."/>
            <person name="Wu Q."/>
            <person name="Li C."/>
            <person name="Ren X."/>
            <person name="Wang J."/>
            <person name="Wang X."/>
            <person name="Li D."/>
            <person name="Liu D."/>
            <person name="Zhang X."/>
            <person name="Ji Z."/>
            <person name="Zhao W."/>
            <person name="Sun Y."/>
            <person name="Zhang Z."/>
            <person name="Bao J."/>
            <person name="Han Y."/>
            <person name="Dong L."/>
            <person name="Ji J."/>
            <person name="Chen P."/>
            <person name="Wu S."/>
            <person name="Liu J."/>
            <person name="Xiao Y."/>
            <person name="Bu D."/>
            <person name="Tan J."/>
            <person name="Yang L."/>
            <person name="Ye C."/>
            <person name="Zhang J."/>
            <person name="Xu J."/>
            <person name="Zhou Y."/>
            <person name="Yu Y."/>
            <person name="Zhang B."/>
            <person name="Zhuang S."/>
            <person name="Wei H."/>
            <person name="Liu B."/>
            <person name="Lei M."/>
            <person name="Yu H."/>
            <person name="Li Y."/>
            <person name="Xu H."/>
            <person name="Wei S."/>
            <person name="He X."/>
            <person name="Fang L."/>
            <person name="Zhang Z."/>
            <person name="Zhang Y."/>
            <person name="Huang X."/>
            <person name="Su Z."/>
            <person name="Tong W."/>
            <person name="Li J."/>
            <person name="Tong Z."/>
            <person name="Li S."/>
            <person name="Ye J."/>
            <person name="Wang L."/>
            <person name="Fang L."/>
            <person name="Lei T."/>
            <person name="Chen C.-S."/>
            <person name="Chen H.-C."/>
            <person name="Xu Z."/>
            <person name="Li H."/>
            <person name="Huang H."/>
            <person name="Zhang F."/>
            <person name="Xu H."/>
            <person name="Li N."/>
            <person name="Zhao C."/>
            <person name="Li S."/>
            <person name="Dong L."/>
            <person name="Huang Y."/>
            <person name="Li L."/>
            <person name="Xi Y."/>
            <person name="Qi Q."/>
            <person name="Li W."/>
            <person name="Zhang B."/>
            <person name="Hu W."/>
            <person name="Zhang Y."/>
            <person name="Tian X."/>
            <person name="Jiao Y."/>
            <person name="Liang X."/>
            <person name="Jin J."/>
            <person name="Gao L."/>
            <person name="Zheng W."/>
            <person name="Hao B."/>
            <person name="Liu S.-M."/>
            <person name="Wang W."/>
            <person name="Yuan L."/>
            <person name="Cao M."/>
            <person name="McDermott J."/>
            <person name="Samudrala R."/>
            <person name="Wang J."/>
            <person name="Wong G.K.-S."/>
            <person name="Yang H."/>
        </authorList>
    </citation>
    <scope>NUCLEOTIDE SEQUENCE [LARGE SCALE GENOMIC DNA]</scope>
    <source>
        <strain>cv. Nipponbare</strain>
    </source>
</reference>
<proteinExistence type="inferred from homology"/>
<name>KN7E_ORYSJ</name>
<evidence type="ECO:0000255" key="1"/>
<evidence type="ECO:0000255" key="2">
    <source>
        <dbReference type="PROSITE-ProRule" id="PRU00283"/>
    </source>
</evidence>
<evidence type="ECO:0000256" key="3">
    <source>
        <dbReference type="SAM" id="MobiDB-lite"/>
    </source>
</evidence>
<evidence type="ECO:0000305" key="4"/>
<evidence type="ECO:0000312" key="5">
    <source>
        <dbReference type="EMBL" id="BAS89294.1"/>
    </source>
</evidence>
<evidence type="ECO:0000312" key="6">
    <source>
        <dbReference type="EMBL" id="CAD41022.1"/>
    </source>
</evidence>
<evidence type="ECO:0000312" key="7">
    <source>
        <dbReference type="EMBL" id="CAE03214.2"/>
    </source>
</evidence>
<evidence type="ECO:0000312" key="8">
    <source>
        <dbReference type="EMBL" id="EEE61037.1"/>
    </source>
</evidence>
<gene>
    <name evidence="4" type="primary">KIN7E</name>
    <name evidence="5" type="ordered locus">Os04g0434600</name>
    <name evidence="4" type="ordered locus">LOC_Os04g35510</name>
    <name evidence="8" type="ORF">OsJ_14878</name>
    <name evidence="7" type="ORF">OSJNBa0088K19.16</name>
    <name evidence="6" type="ORF">OSJNBb0086G13.9</name>
</gene>
<feature type="transit peptide" description="Chloroplast" evidence="1">
    <location>
        <begin position="1"/>
        <end position="21"/>
    </location>
</feature>
<feature type="chain" id="PRO_0000436626" description="Kinesin-like protein KIN-7E, chloroplastic">
    <location>
        <begin position="22"/>
        <end position="1154"/>
    </location>
</feature>
<feature type="domain" description="Kinesin motor" evidence="2">
    <location>
        <begin position="119"/>
        <end position="437"/>
    </location>
</feature>
<feature type="region of interest" description="Disordered" evidence="3">
    <location>
        <begin position="1"/>
        <end position="109"/>
    </location>
</feature>
<feature type="region of interest" description="Disordered" evidence="3">
    <location>
        <begin position="620"/>
        <end position="674"/>
    </location>
</feature>
<feature type="region of interest" description="Disordered" evidence="3">
    <location>
        <begin position="838"/>
        <end position="885"/>
    </location>
</feature>
<feature type="coiled-coil region" evidence="1">
    <location>
        <begin position="441"/>
        <end position="523"/>
    </location>
</feature>
<feature type="coiled-coil region" evidence="1">
    <location>
        <begin position="734"/>
        <end position="761"/>
    </location>
</feature>
<feature type="coiled-coil region" evidence="1">
    <location>
        <begin position="801"/>
        <end position="845"/>
    </location>
</feature>
<feature type="coiled-coil region" evidence="1">
    <location>
        <begin position="894"/>
        <end position="967"/>
    </location>
</feature>
<feature type="compositionally biased region" description="Low complexity" evidence="3">
    <location>
        <begin position="1"/>
        <end position="14"/>
    </location>
</feature>
<feature type="compositionally biased region" description="Low complexity" evidence="3">
    <location>
        <begin position="29"/>
        <end position="109"/>
    </location>
</feature>
<feature type="compositionally biased region" description="Low complexity" evidence="3">
    <location>
        <begin position="628"/>
        <end position="640"/>
    </location>
</feature>
<feature type="compositionally biased region" description="Low complexity" evidence="3">
    <location>
        <begin position="846"/>
        <end position="857"/>
    </location>
</feature>
<feature type="binding site" evidence="2">
    <location>
        <begin position="199"/>
        <end position="206"/>
    </location>
    <ligand>
        <name>ATP</name>
        <dbReference type="ChEBI" id="CHEBI:30616"/>
    </ligand>
</feature>
<feature type="sequence conflict" description="In Ref. 4; EEE61037." evidence="4" ref="4">
    <original>A</original>
    <variation>E</variation>
    <location>
        <position position="97"/>
    </location>
</feature>
<accession>B9FFA3</accession>
<accession>A0A0P0WAG5</accession>
<accession>Q7X7H8</accession>
<keyword id="KW-0067">ATP-binding</keyword>
<keyword id="KW-0150">Chloroplast</keyword>
<keyword id="KW-0175">Coiled coil</keyword>
<keyword id="KW-0493">Microtubule</keyword>
<keyword id="KW-0505">Motor protein</keyword>
<keyword id="KW-0547">Nucleotide-binding</keyword>
<keyword id="KW-0934">Plastid</keyword>
<keyword id="KW-1185">Reference proteome</keyword>
<keyword id="KW-0809">Transit peptide</keyword>
<sequence>MSSSSRPGRASISPFRSRRTSAAGGGAGVAAAAHPPPARTSSGGRPSTPSSSSSAAGGGRPTTPSSSSAGGRPTTPSAAFARSTTPSSGRPTTPSSASSRAAGRAPPVAAVDAANAKENIMVTVRFRPLSPREINKGDEVAWYANGDNMVRNEYNPSIAYAFDKVFGPATTTRHVYDIAAQHVVSGAMEGINGTVFAYGVTSSGKTHTMHGEQKSPGIIPLAVKDVFSIIQDTPGREFLLRVSYLEIYNEVINDLLDPIGQNLRIREDAQGTYVEGIKEEVVLSPAHALSLIASGEEHRHVGSNNFNLVSSRSHTIFTLTIESSPSGENDEGEVKLSQLNLIDLAGSESSKTETTGLRRKEGSYINKSLLTLGTVIAKLTDGKATHIPYRDSKLTRLLQSSLSGHGRISLICTVTPASSNSEETHNTLKFAHRSKHIEIKASQNKIIDEKSLIKKYQKEITCLKEELQQLRRGMMGNGYIPPTDQEDLVSLKLQLEAGQVKLQSRLEEEEEAKAALMGRIQRLTKLILVSTKSSISSNVSGKASLRRRHSFGEDELAYLPDRKREYSMEDDDVSLDSEFSVEGKLDSNNPDESLRFDRRNRRRGMLGWFKLKKSDQLSGLSTSVDSESTASGSPSFSRSSQQKHPLLDLKDGRRKSMTRKGDDPALTDSFPGRTQAGDLFSAASRARHHLPSGTTIVDQIDLLQEQVKMLAGEVALCTSSLKRLSEQAANNPDDSQIQEQIEKLKNEIDEKKSHIRVLEQRMAQSLETTEDPAIRTEMSQTFSKLSTQLSEKTFELEIMSADNRILQDQLQAKVSENAELVETVAQLRQEIDNLLKTAKNEDNVASMQSSEPSSTSSNPRDLANEVASHSKMPSRTTEDHTESPLKSQVLLQAAEIENLKLDKLRLAEEKDGLEIHSQKLAEESSYAKELAAAAAVELKNLAEEVTRLSYENAKLNADLAAAKDQTRSSIQSDTKRRDQENGIFVEELQKELVASCQREAVLEDTLSQRARRESELLKVIEDAKCHEHDLENELANMWMLVAELKKENSQEDLFQFKATQNGYHSSKSDTGRMMSGMEASDNRNWDGVSVSTYEEAKAAYNVQRRRCKELEGIVSRLKGEDLRGLDVKVLEELQNFHVEALSKICQEKMANQVL</sequence>
<protein>
    <recommendedName>
        <fullName evidence="4">Kinesin-like protein KIN-7E, chloroplastic</fullName>
    </recommendedName>
</protein>
<organism>
    <name type="scientific">Oryza sativa subsp. japonica</name>
    <name type="common">Rice</name>
    <dbReference type="NCBI Taxonomy" id="39947"/>
    <lineage>
        <taxon>Eukaryota</taxon>
        <taxon>Viridiplantae</taxon>
        <taxon>Streptophyta</taxon>
        <taxon>Embryophyta</taxon>
        <taxon>Tracheophyta</taxon>
        <taxon>Spermatophyta</taxon>
        <taxon>Magnoliopsida</taxon>
        <taxon>Liliopsida</taxon>
        <taxon>Poales</taxon>
        <taxon>Poaceae</taxon>
        <taxon>BOP clade</taxon>
        <taxon>Oryzoideae</taxon>
        <taxon>Oryzeae</taxon>
        <taxon>Oryzinae</taxon>
        <taxon>Oryza</taxon>
        <taxon>Oryza sativa</taxon>
    </lineage>
</organism>
<dbReference type="EMBL" id="AL606626">
    <property type="protein sequence ID" value="CAE03214.2"/>
    <property type="status" value="ALT_SEQ"/>
    <property type="molecule type" value="Genomic_DNA"/>
</dbReference>
<dbReference type="EMBL" id="AL606706">
    <property type="protein sequence ID" value="CAD41022.1"/>
    <property type="status" value="ALT_SEQ"/>
    <property type="molecule type" value="Genomic_DNA"/>
</dbReference>
<dbReference type="EMBL" id="AP014960">
    <property type="protein sequence ID" value="BAS89294.1"/>
    <property type="status" value="ALT_SEQ"/>
    <property type="molecule type" value="Genomic_DNA"/>
</dbReference>
<dbReference type="EMBL" id="CM000141">
    <property type="protein sequence ID" value="EEE61037.1"/>
    <property type="status" value="ALT_SEQ"/>
    <property type="molecule type" value="Genomic_DNA"/>
</dbReference>
<dbReference type="SMR" id="B9FFA3"/>
<dbReference type="FunCoup" id="B9FFA3">
    <property type="interactions" value="942"/>
</dbReference>
<dbReference type="STRING" id="39947.B9FFA3"/>
<dbReference type="PaxDb" id="39947-B9FFA3"/>
<dbReference type="GeneID" id="9271714"/>
<dbReference type="KEGG" id="osa:9271714"/>
<dbReference type="eggNOG" id="KOG0242">
    <property type="taxonomic scope" value="Eukaryota"/>
</dbReference>
<dbReference type="InParanoid" id="B9FFA3"/>
<dbReference type="OrthoDB" id="3176171at2759"/>
<dbReference type="Proteomes" id="UP000000763">
    <property type="component" value="Chromosome 4"/>
</dbReference>
<dbReference type="Proteomes" id="UP000007752">
    <property type="component" value="Chromosome 4"/>
</dbReference>
<dbReference type="Proteomes" id="UP000059680">
    <property type="component" value="Chromosome 4"/>
</dbReference>
<dbReference type="GO" id="GO:0009507">
    <property type="term" value="C:chloroplast"/>
    <property type="evidence" value="ECO:0007669"/>
    <property type="project" value="UniProtKB-SubCell"/>
</dbReference>
<dbReference type="GO" id="GO:0005737">
    <property type="term" value="C:cytoplasm"/>
    <property type="evidence" value="ECO:0000318"/>
    <property type="project" value="GO_Central"/>
</dbReference>
<dbReference type="GO" id="GO:0005871">
    <property type="term" value="C:kinesin complex"/>
    <property type="evidence" value="ECO:0000318"/>
    <property type="project" value="GO_Central"/>
</dbReference>
<dbReference type="GO" id="GO:0005874">
    <property type="term" value="C:microtubule"/>
    <property type="evidence" value="ECO:0000318"/>
    <property type="project" value="GO_Central"/>
</dbReference>
<dbReference type="GO" id="GO:0005524">
    <property type="term" value="F:ATP binding"/>
    <property type="evidence" value="ECO:0007669"/>
    <property type="project" value="UniProtKB-KW"/>
</dbReference>
<dbReference type="GO" id="GO:0016887">
    <property type="term" value="F:ATP hydrolysis activity"/>
    <property type="evidence" value="ECO:0000318"/>
    <property type="project" value="GO_Central"/>
</dbReference>
<dbReference type="GO" id="GO:0008017">
    <property type="term" value="F:microtubule binding"/>
    <property type="evidence" value="ECO:0000318"/>
    <property type="project" value="GO_Central"/>
</dbReference>
<dbReference type="GO" id="GO:0003777">
    <property type="term" value="F:microtubule motor activity"/>
    <property type="evidence" value="ECO:0000318"/>
    <property type="project" value="GO_Central"/>
</dbReference>
<dbReference type="GO" id="GO:0007018">
    <property type="term" value="P:microtubule-based movement"/>
    <property type="evidence" value="ECO:0000318"/>
    <property type="project" value="GO_Central"/>
</dbReference>
<dbReference type="CDD" id="cd01374">
    <property type="entry name" value="KISc_CENP_E"/>
    <property type="match status" value="1"/>
</dbReference>
<dbReference type="FunFam" id="3.40.850.10:FF:000014">
    <property type="entry name" value="Kinesin-like protein KIN-7G"/>
    <property type="match status" value="1"/>
</dbReference>
<dbReference type="Gene3D" id="3.40.850.10">
    <property type="entry name" value="Kinesin motor domain"/>
    <property type="match status" value="1"/>
</dbReference>
<dbReference type="InterPro" id="IPR027640">
    <property type="entry name" value="Kinesin-like_fam"/>
</dbReference>
<dbReference type="InterPro" id="IPR019821">
    <property type="entry name" value="Kinesin_motor_CS"/>
</dbReference>
<dbReference type="InterPro" id="IPR001752">
    <property type="entry name" value="Kinesin_motor_dom"/>
</dbReference>
<dbReference type="InterPro" id="IPR036961">
    <property type="entry name" value="Kinesin_motor_dom_sf"/>
</dbReference>
<dbReference type="InterPro" id="IPR027417">
    <property type="entry name" value="P-loop_NTPase"/>
</dbReference>
<dbReference type="PANTHER" id="PTHR47968">
    <property type="entry name" value="CENTROMERE PROTEIN E"/>
    <property type="match status" value="1"/>
</dbReference>
<dbReference type="PANTHER" id="PTHR47968:SF33">
    <property type="entry name" value="KINESIN-LIKE PROTEIN KIN-7C, MITOCHONDRIAL ISOFORM X1"/>
    <property type="match status" value="1"/>
</dbReference>
<dbReference type="Pfam" id="PF00225">
    <property type="entry name" value="Kinesin"/>
    <property type="match status" value="1"/>
</dbReference>
<dbReference type="PRINTS" id="PR00380">
    <property type="entry name" value="KINESINHEAVY"/>
</dbReference>
<dbReference type="SMART" id="SM00129">
    <property type="entry name" value="KISc"/>
    <property type="match status" value="1"/>
</dbReference>
<dbReference type="SUPFAM" id="SSF52540">
    <property type="entry name" value="P-loop containing nucleoside triphosphate hydrolases"/>
    <property type="match status" value="1"/>
</dbReference>
<dbReference type="PROSITE" id="PS00411">
    <property type="entry name" value="KINESIN_MOTOR_1"/>
    <property type="match status" value="1"/>
</dbReference>
<dbReference type="PROSITE" id="PS50067">
    <property type="entry name" value="KINESIN_MOTOR_2"/>
    <property type="match status" value="1"/>
</dbReference>